<protein>
    <recommendedName>
        <fullName>Probable G-protein coupled receptor Mth-like 9</fullName>
    </recommendedName>
    <alternativeName>
        <fullName>Protein methuselah-like 9</fullName>
    </alternativeName>
</protein>
<dbReference type="EMBL" id="AE014296">
    <property type="protein sequence ID" value="AAF47377.1"/>
    <property type="molecule type" value="Genomic_DNA"/>
</dbReference>
<dbReference type="EMBL" id="AY070598">
    <property type="protein sequence ID" value="AAL48069.1"/>
    <property type="molecule type" value="mRNA"/>
</dbReference>
<dbReference type="EMBL" id="AY113401">
    <property type="protein sequence ID" value="AAM29406.1"/>
    <property type="molecule type" value="mRNA"/>
</dbReference>
<dbReference type="RefSeq" id="NP_612029.1">
    <property type="nucleotide sequence ID" value="NM_138185.4"/>
</dbReference>
<dbReference type="SMR" id="Q9W0R6"/>
<dbReference type="BioGRID" id="63612">
    <property type="interactions" value="1"/>
</dbReference>
<dbReference type="DIP" id="DIP-22552N"/>
<dbReference type="FunCoup" id="Q9W0R6">
    <property type="interactions" value="42"/>
</dbReference>
<dbReference type="IntAct" id="Q9W0R6">
    <property type="interactions" value="1"/>
</dbReference>
<dbReference type="STRING" id="7227.FBpp0072473"/>
<dbReference type="GlyCosmos" id="Q9W0R6">
    <property type="glycosylation" value="4 sites, No reported glycans"/>
</dbReference>
<dbReference type="GlyGen" id="Q9W0R6">
    <property type="glycosylation" value="4 sites"/>
</dbReference>
<dbReference type="PaxDb" id="7227-FBpp0072473"/>
<dbReference type="DNASU" id="38056"/>
<dbReference type="EnsemblMetazoa" id="FBtr0072574">
    <property type="protein sequence ID" value="FBpp0072473"/>
    <property type="gene ID" value="FBgn0035131"/>
</dbReference>
<dbReference type="GeneID" id="38056"/>
<dbReference type="KEGG" id="dme:Dmel_CG17084"/>
<dbReference type="AGR" id="FB:FBgn0035131"/>
<dbReference type="CTD" id="38056"/>
<dbReference type="FlyBase" id="FBgn0035131">
    <property type="gene designation" value="mthl9"/>
</dbReference>
<dbReference type="VEuPathDB" id="VectorBase:FBgn0035131"/>
<dbReference type="eggNOG" id="ENOG502TGKW">
    <property type="taxonomic scope" value="Eukaryota"/>
</dbReference>
<dbReference type="GeneTree" id="ENSGT00940000170903"/>
<dbReference type="HOGENOM" id="CLU_002753_3_0_1"/>
<dbReference type="InParanoid" id="Q9W0R6"/>
<dbReference type="OMA" id="NCERFQR"/>
<dbReference type="OrthoDB" id="6134459at2759"/>
<dbReference type="PhylomeDB" id="Q9W0R6"/>
<dbReference type="BioGRID-ORCS" id="38056">
    <property type="hits" value="0 hits in 1 CRISPR screen"/>
</dbReference>
<dbReference type="GenomeRNAi" id="38056"/>
<dbReference type="PRO" id="PR:Q9W0R6"/>
<dbReference type="Proteomes" id="UP000000803">
    <property type="component" value="Chromosome 3L"/>
</dbReference>
<dbReference type="Bgee" id="FBgn0035131">
    <property type="expression patterns" value="Expressed in adult Malpighian tubule (Drosophila) and 30 other cell types or tissues"/>
</dbReference>
<dbReference type="GO" id="GO:0016020">
    <property type="term" value="C:membrane"/>
    <property type="evidence" value="ECO:0000250"/>
    <property type="project" value="FlyBase"/>
</dbReference>
<dbReference type="GO" id="GO:0005886">
    <property type="term" value="C:plasma membrane"/>
    <property type="evidence" value="ECO:0000318"/>
    <property type="project" value="GO_Central"/>
</dbReference>
<dbReference type="GO" id="GO:0008528">
    <property type="term" value="F:G protein-coupled peptide receptor activity"/>
    <property type="evidence" value="ECO:0000318"/>
    <property type="project" value="GO_Central"/>
</dbReference>
<dbReference type="GO" id="GO:0004930">
    <property type="term" value="F:G protein-coupled receptor activity"/>
    <property type="evidence" value="ECO:0000250"/>
    <property type="project" value="FlyBase"/>
</dbReference>
<dbReference type="GO" id="GO:0008340">
    <property type="term" value="P:determination of adult lifespan"/>
    <property type="evidence" value="ECO:0000250"/>
    <property type="project" value="UniProtKB"/>
</dbReference>
<dbReference type="GO" id="GO:0007186">
    <property type="term" value="P:G protein-coupled receptor signaling pathway"/>
    <property type="evidence" value="ECO:0000250"/>
    <property type="project" value="FlyBase"/>
</dbReference>
<dbReference type="GO" id="GO:0042594">
    <property type="term" value="P:response to starvation"/>
    <property type="evidence" value="ECO:0000250"/>
    <property type="project" value="UniProtKB"/>
</dbReference>
<dbReference type="CDD" id="cd15039">
    <property type="entry name" value="7tmB3_Methuselah-like"/>
    <property type="match status" value="1"/>
</dbReference>
<dbReference type="CDD" id="cd00251">
    <property type="entry name" value="Mth_Ecto"/>
    <property type="match status" value="1"/>
</dbReference>
<dbReference type="FunFam" id="1.20.1070.10:FF:000580">
    <property type="entry name" value="probable G-protein coupled receptor Mth-like 9"/>
    <property type="match status" value="1"/>
</dbReference>
<dbReference type="Gene3D" id="2.30.160.11">
    <property type="match status" value="1"/>
</dbReference>
<dbReference type="Gene3D" id="2.170.180.11">
    <property type="entry name" value="Methuselah ectodomain, domain 2"/>
    <property type="match status" value="1"/>
</dbReference>
<dbReference type="Gene3D" id="1.20.1070.10">
    <property type="entry name" value="Rhodopsin 7-helix transmembrane proteins"/>
    <property type="match status" value="1"/>
</dbReference>
<dbReference type="InterPro" id="IPR044860">
    <property type="entry name" value="Methusela_ecto_dom_1"/>
</dbReference>
<dbReference type="InterPro" id="IPR023311">
    <property type="entry name" value="Methusela_ecto_dom_2"/>
</dbReference>
<dbReference type="InterPro" id="IPR010596">
    <property type="entry name" value="Methuselah_N_dom"/>
</dbReference>
<dbReference type="InterPro" id="IPR036272">
    <property type="entry name" value="Methuselah_N_sf"/>
</dbReference>
<dbReference type="InterPro" id="IPR051384">
    <property type="entry name" value="Mth_GPCR"/>
</dbReference>
<dbReference type="PANTHER" id="PTHR47154">
    <property type="entry name" value="G-PROTEIN COUPLED RECEPTOR MTH-RELATED"/>
    <property type="match status" value="1"/>
</dbReference>
<dbReference type="PANTHER" id="PTHR47154:SF2">
    <property type="entry name" value="G-PROTEIN COUPLED RECEPTOR MTH-RELATED"/>
    <property type="match status" value="1"/>
</dbReference>
<dbReference type="Pfam" id="PF06652">
    <property type="entry name" value="Methuselah_N"/>
    <property type="match status" value="1"/>
</dbReference>
<dbReference type="SUPFAM" id="SSF81321">
    <property type="entry name" value="Family A G protein-coupled receptor-like"/>
    <property type="match status" value="1"/>
</dbReference>
<dbReference type="SUPFAM" id="SSF63877">
    <property type="entry name" value="Methuselah ectodomain"/>
    <property type="match status" value="1"/>
</dbReference>
<sequence length="513" mass="59039">MVSPLIILLIIWLSVGAKSVEIASINHPCAYAHTVNITDGLRMKDGSYSYAGVVVPPHLMAEYSFKVIDGVEYRAKKHLRGCVCLLKPCISFCCPENLVFDAKHWNCTMPHQVRESTHVELTYANRTVDQVRIRDRFVVRTELGCRNKFVDKKHDNFWQWDLFENGTLRRDNRLWSTDEYCFSPLEHNPEQWELTPLNCERFQTGYRVWIYAICSIIAIIINIFILSLLGSVRDARKSHYGQLIIYYLLSMIVGYSLLVYLALKNPMKLSHVACRNIGFLAYFCIMLSFVFLAICSLDFLLKFKQKAVRSSVRRLSLALAVLAVIGLRFLVSLAQDSKLPKHFKPGMGEDYCWFDVRTWGILIYYYGPIALLLIFSIVCCLKAYFSIYELPPDTQYILGTQLKIVKTHFYAFSAYIVGVFAVWIREIVVYIMARVREHFFIIDFWSGICILGLAIAGFILLLGKNLHVKSWWAINVESSQTDLSIINARVYKFDEKGDLKSSDSPYKPTVTSL</sequence>
<reference key="1">
    <citation type="journal article" date="2000" name="Science">
        <title>The genome sequence of Drosophila melanogaster.</title>
        <authorList>
            <person name="Adams M.D."/>
            <person name="Celniker S.E."/>
            <person name="Holt R.A."/>
            <person name="Evans C.A."/>
            <person name="Gocayne J.D."/>
            <person name="Amanatides P.G."/>
            <person name="Scherer S.E."/>
            <person name="Li P.W."/>
            <person name="Hoskins R.A."/>
            <person name="Galle R.F."/>
            <person name="George R.A."/>
            <person name="Lewis S.E."/>
            <person name="Richards S."/>
            <person name="Ashburner M."/>
            <person name="Henderson S.N."/>
            <person name="Sutton G.G."/>
            <person name="Wortman J.R."/>
            <person name="Yandell M.D."/>
            <person name="Zhang Q."/>
            <person name="Chen L.X."/>
            <person name="Brandon R.C."/>
            <person name="Rogers Y.-H.C."/>
            <person name="Blazej R.G."/>
            <person name="Champe M."/>
            <person name="Pfeiffer B.D."/>
            <person name="Wan K.H."/>
            <person name="Doyle C."/>
            <person name="Baxter E.G."/>
            <person name="Helt G."/>
            <person name="Nelson C.R."/>
            <person name="Miklos G.L.G."/>
            <person name="Abril J.F."/>
            <person name="Agbayani A."/>
            <person name="An H.-J."/>
            <person name="Andrews-Pfannkoch C."/>
            <person name="Baldwin D."/>
            <person name="Ballew R.M."/>
            <person name="Basu A."/>
            <person name="Baxendale J."/>
            <person name="Bayraktaroglu L."/>
            <person name="Beasley E.M."/>
            <person name="Beeson K.Y."/>
            <person name="Benos P.V."/>
            <person name="Berman B.P."/>
            <person name="Bhandari D."/>
            <person name="Bolshakov S."/>
            <person name="Borkova D."/>
            <person name="Botchan M.R."/>
            <person name="Bouck J."/>
            <person name="Brokstein P."/>
            <person name="Brottier P."/>
            <person name="Burtis K.C."/>
            <person name="Busam D.A."/>
            <person name="Butler H."/>
            <person name="Cadieu E."/>
            <person name="Center A."/>
            <person name="Chandra I."/>
            <person name="Cherry J.M."/>
            <person name="Cawley S."/>
            <person name="Dahlke C."/>
            <person name="Davenport L.B."/>
            <person name="Davies P."/>
            <person name="de Pablos B."/>
            <person name="Delcher A."/>
            <person name="Deng Z."/>
            <person name="Mays A.D."/>
            <person name="Dew I."/>
            <person name="Dietz S.M."/>
            <person name="Dodson K."/>
            <person name="Doup L.E."/>
            <person name="Downes M."/>
            <person name="Dugan-Rocha S."/>
            <person name="Dunkov B.C."/>
            <person name="Dunn P."/>
            <person name="Durbin K.J."/>
            <person name="Evangelista C.C."/>
            <person name="Ferraz C."/>
            <person name="Ferriera S."/>
            <person name="Fleischmann W."/>
            <person name="Fosler C."/>
            <person name="Gabrielian A.E."/>
            <person name="Garg N.S."/>
            <person name="Gelbart W.M."/>
            <person name="Glasser K."/>
            <person name="Glodek A."/>
            <person name="Gong F."/>
            <person name="Gorrell J.H."/>
            <person name="Gu Z."/>
            <person name="Guan P."/>
            <person name="Harris M."/>
            <person name="Harris N.L."/>
            <person name="Harvey D.A."/>
            <person name="Heiman T.J."/>
            <person name="Hernandez J.R."/>
            <person name="Houck J."/>
            <person name="Hostin D."/>
            <person name="Houston K.A."/>
            <person name="Howland T.J."/>
            <person name="Wei M.-H."/>
            <person name="Ibegwam C."/>
            <person name="Jalali M."/>
            <person name="Kalush F."/>
            <person name="Karpen G.H."/>
            <person name="Ke Z."/>
            <person name="Kennison J.A."/>
            <person name="Ketchum K.A."/>
            <person name="Kimmel B.E."/>
            <person name="Kodira C.D."/>
            <person name="Kraft C.L."/>
            <person name="Kravitz S."/>
            <person name="Kulp D."/>
            <person name="Lai Z."/>
            <person name="Lasko P."/>
            <person name="Lei Y."/>
            <person name="Levitsky A.A."/>
            <person name="Li J.H."/>
            <person name="Li Z."/>
            <person name="Liang Y."/>
            <person name="Lin X."/>
            <person name="Liu X."/>
            <person name="Mattei B."/>
            <person name="McIntosh T.C."/>
            <person name="McLeod M.P."/>
            <person name="McPherson D."/>
            <person name="Merkulov G."/>
            <person name="Milshina N.V."/>
            <person name="Mobarry C."/>
            <person name="Morris J."/>
            <person name="Moshrefi A."/>
            <person name="Mount S.M."/>
            <person name="Moy M."/>
            <person name="Murphy B."/>
            <person name="Murphy L."/>
            <person name="Muzny D.M."/>
            <person name="Nelson D.L."/>
            <person name="Nelson D.R."/>
            <person name="Nelson K.A."/>
            <person name="Nixon K."/>
            <person name="Nusskern D.R."/>
            <person name="Pacleb J.M."/>
            <person name="Palazzolo M."/>
            <person name="Pittman G.S."/>
            <person name="Pan S."/>
            <person name="Pollard J."/>
            <person name="Puri V."/>
            <person name="Reese M.G."/>
            <person name="Reinert K."/>
            <person name="Remington K."/>
            <person name="Saunders R.D.C."/>
            <person name="Scheeler F."/>
            <person name="Shen H."/>
            <person name="Shue B.C."/>
            <person name="Siden-Kiamos I."/>
            <person name="Simpson M."/>
            <person name="Skupski M.P."/>
            <person name="Smith T.J."/>
            <person name="Spier E."/>
            <person name="Spradling A.C."/>
            <person name="Stapleton M."/>
            <person name="Strong R."/>
            <person name="Sun E."/>
            <person name="Svirskas R."/>
            <person name="Tector C."/>
            <person name="Turner R."/>
            <person name="Venter E."/>
            <person name="Wang A.H."/>
            <person name="Wang X."/>
            <person name="Wang Z.-Y."/>
            <person name="Wassarman D.A."/>
            <person name="Weinstock G.M."/>
            <person name="Weissenbach J."/>
            <person name="Williams S.M."/>
            <person name="Woodage T."/>
            <person name="Worley K.C."/>
            <person name="Wu D."/>
            <person name="Yang S."/>
            <person name="Yao Q.A."/>
            <person name="Ye J."/>
            <person name="Yeh R.-F."/>
            <person name="Zaveri J.S."/>
            <person name="Zhan M."/>
            <person name="Zhang G."/>
            <person name="Zhao Q."/>
            <person name="Zheng L."/>
            <person name="Zheng X.H."/>
            <person name="Zhong F.N."/>
            <person name="Zhong W."/>
            <person name="Zhou X."/>
            <person name="Zhu S.C."/>
            <person name="Zhu X."/>
            <person name="Smith H.O."/>
            <person name="Gibbs R.A."/>
            <person name="Myers E.W."/>
            <person name="Rubin G.M."/>
            <person name="Venter J.C."/>
        </authorList>
    </citation>
    <scope>NUCLEOTIDE SEQUENCE [LARGE SCALE GENOMIC DNA]</scope>
    <source>
        <strain>Berkeley</strain>
    </source>
</reference>
<reference key="2">
    <citation type="journal article" date="2002" name="Genome Biol.">
        <title>Annotation of the Drosophila melanogaster euchromatic genome: a systematic review.</title>
        <authorList>
            <person name="Misra S."/>
            <person name="Crosby M.A."/>
            <person name="Mungall C.J."/>
            <person name="Matthews B.B."/>
            <person name="Campbell K.S."/>
            <person name="Hradecky P."/>
            <person name="Huang Y."/>
            <person name="Kaminker J.S."/>
            <person name="Millburn G.H."/>
            <person name="Prochnik S.E."/>
            <person name="Smith C.D."/>
            <person name="Tupy J.L."/>
            <person name="Whitfield E.J."/>
            <person name="Bayraktaroglu L."/>
            <person name="Berman B.P."/>
            <person name="Bettencourt B.R."/>
            <person name="Celniker S.E."/>
            <person name="de Grey A.D.N.J."/>
            <person name="Drysdale R.A."/>
            <person name="Harris N.L."/>
            <person name="Richter J."/>
            <person name="Russo S."/>
            <person name="Schroeder A.J."/>
            <person name="Shu S.Q."/>
            <person name="Stapleton M."/>
            <person name="Yamada C."/>
            <person name="Ashburner M."/>
            <person name="Gelbart W.M."/>
            <person name="Rubin G.M."/>
            <person name="Lewis S.E."/>
        </authorList>
    </citation>
    <scope>GENOME REANNOTATION</scope>
    <source>
        <strain>Berkeley</strain>
    </source>
</reference>
<reference key="3">
    <citation type="journal article" date="2002" name="Genome Biol.">
        <title>A Drosophila full-length cDNA resource.</title>
        <authorList>
            <person name="Stapleton M."/>
            <person name="Carlson J.W."/>
            <person name="Brokstein P."/>
            <person name="Yu C."/>
            <person name="Champe M."/>
            <person name="George R.A."/>
            <person name="Guarin H."/>
            <person name="Kronmiller B."/>
            <person name="Pacleb J.M."/>
            <person name="Park S."/>
            <person name="Wan K.H."/>
            <person name="Rubin G.M."/>
            <person name="Celniker S.E."/>
        </authorList>
    </citation>
    <scope>NUCLEOTIDE SEQUENCE [LARGE SCALE MRNA]</scope>
    <source>
        <strain>Berkeley</strain>
        <tissue>Embryo</tissue>
    </source>
</reference>
<reference key="4">
    <citation type="journal article" date="2000" name="J. Cell Biol.">
        <title>Drosophila melanogaster G protein-coupled receptors.</title>
        <authorList>
            <person name="Brody T."/>
            <person name="Cravchik A."/>
        </authorList>
    </citation>
    <scope>REVIEW</scope>
</reference>
<keyword id="KW-1003">Cell membrane</keyword>
<keyword id="KW-1015">Disulfide bond</keyword>
<keyword id="KW-0297">G-protein coupled receptor</keyword>
<keyword id="KW-0325">Glycoprotein</keyword>
<keyword id="KW-0472">Membrane</keyword>
<keyword id="KW-0675">Receptor</keyword>
<keyword id="KW-1185">Reference proteome</keyword>
<keyword id="KW-0732">Signal</keyword>
<keyword id="KW-0807">Transducer</keyword>
<keyword id="KW-0812">Transmembrane</keyword>
<keyword id="KW-1133">Transmembrane helix</keyword>
<evidence type="ECO:0000250" key="1">
    <source>
        <dbReference type="UniProtKB" id="O97148"/>
    </source>
</evidence>
<evidence type="ECO:0000255" key="2"/>
<evidence type="ECO:0000305" key="3"/>
<proteinExistence type="evidence at transcript level"/>
<gene>
    <name type="primary">mthl9</name>
    <name type="ORF">CG17084</name>
</gene>
<organism>
    <name type="scientific">Drosophila melanogaster</name>
    <name type="common">Fruit fly</name>
    <dbReference type="NCBI Taxonomy" id="7227"/>
    <lineage>
        <taxon>Eukaryota</taxon>
        <taxon>Metazoa</taxon>
        <taxon>Ecdysozoa</taxon>
        <taxon>Arthropoda</taxon>
        <taxon>Hexapoda</taxon>
        <taxon>Insecta</taxon>
        <taxon>Pterygota</taxon>
        <taxon>Neoptera</taxon>
        <taxon>Endopterygota</taxon>
        <taxon>Diptera</taxon>
        <taxon>Brachycera</taxon>
        <taxon>Muscomorpha</taxon>
        <taxon>Ephydroidea</taxon>
        <taxon>Drosophilidae</taxon>
        <taxon>Drosophila</taxon>
        <taxon>Sophophora</taxon>
    </lineage>
</organism>
<name>MTH9_DROME</name>
<comment type="subcellular location">
    <subcellularLocation>
        <location evidence="3">Cell membrane</location>
        <topology evidence="3">Multi-pass membrane protein</topology>
    </subcellularLocation>
</comment>
<comment type="similarity">
    <text evidence="3">Belongs to the G-protein coupled receptor 2 family. Mth subfamily.</text>
</comment>
<feature type="signal peptide" evidence="2">
    <location>
        <begin position="1"/>
        <end position="19"/>
    </location>
</feature>
<feature type="chain" id="PRO_0000013030" description="Probable G-protein coupled receptor Mth-like 9">
    <location>
        <begin position="20"/>
        <end position="513"/>
    </location>
</feature>
<feature type="topological domain" description="Extracellular" evidence="2">
    <location>
        <begin position="20"/>
        <end position="207"/>
    </location>
</feature>
<feature type="transmembrane region" description="Helical; Name=1" evidence="2">
    <location>
        <begin position="208"/>
        <end position="228"/>
    </location>
</feature>
<feature type="topological domain" description="Cytoplasmic" evidence="2">
    <location>
        <begin position="229"/>
        <end position="242"/>
    </location>
</feature>
<feature type="transmembrane region" description="Helical; Name=2" evidence="2">
    <location>
        <begin position="243"/>
        <end position="263"/>
    </location>
</feature>
<feature type="topological domain" description="Extracellular" evidence="2">
    <location>
        <begin position="264"/>
        <end position="276"/>
    </location>
</feature>
<feature type="transmembrane region" description="Helical; Name=3" evidence="2">
    <location>
        <begin position="277"/>
        <end position="297"/>
    </location>
</feature>
<feature type="topological domain" description="Cytoplasmic" evidence="2">
    <location>
        <begin position="298"/>
        <end position="314"/>
    </location>
</feature>
<feature type="transmembrane region" description="Helical; Name=4" evidence="2">
    <location>
        <begin position="315"/>
        <end position="335"/>
    </location>
</feature>
<feature type="topological domain" description="Extracellular" evidence="2">
    <location>
        <begin position="336"/>
        <end position="360"/>
    </location>
</feature>
<feature type="transmembrane region" description="Helical; Name=5" evidence="2">
    <location>
        <begin position="361"/>
        <end position="381"/>
    </location>
</feature>
<feature type="topological domain" description="Cytoplasmic" evidence="2">
    <location>
        <begin position="382"/>
        <end position="403"/>
    </location>
</feature>
<feature type="transmembrane region" description="Helical; Name=6" evidence="2">
    <location>
        <begin position="404"/>
        <end position="424"/>
    </location>
</feature>
<feature type="topological domain" description="Extracellular" evidence="2">
    <location>
        <begin position="425"/>
        <end position="438"/>
    </location>
</feature>
<feature type="transmembrane region" description="Helical; Name=7" evidence="2">
    <location>
        <begin position="439"/>
        <end position="459"/>
    </location>
</feature>
<feature type="topological domain" description="Cytoplasmic" evidence="2">
    <location>
        <begin position="460"/>
        <end position="513"/>
    </location>
</feature>
<feature type="glycosylation site" description="N-linked (GlcNAc...) asparagine" evidence="2">
    <location>
        <position position="36"/>
    </location>
</feature>
<feature type="glycosylation site" description="N-linked (GlcNAc...) asparagine" evidence="2">
    <location>
        <position position="106"/>
    </location>
</feature>
<feature type="glycosylation site" description="N-linked (GlcNAc...) asparagine" evidence="2">
    <location>
        <position position="125"/>
    </location>
</feature>
<feature type="glycosylation site" description="N-linked (GlcNAc...) asparagine" evidence="1">
    <location>
        <position position="165"/>
    </location>
</feature>
<feature type="disulfide bond" evidence="1">
    <location>
        <begin position="29"/>
        <end position="82"/>
    </location>
</feature>
<feature type="disulfide bond" evidence="1">
    <location>
        <begin position="84"/>
        <end position="89"/>
    </location>
</feature>
<feature type="disulfide bond" evidence="1">
    <location>
        <begin position="93"/>
        <end position="181"/>
    </location>
</feature>
<feature type="disulfide bond" evidence="1">
    <location>
        <begin position="94"/>
        <end position="107"/>
    </location>
</feature>
<accession>Q9W0R6</accession>